<reference key="1">
    <citation type="submission" date="2007-10" db="EMBL/GenBank/DDBJ databases">
        <title>Complete sequence of Shewanella pealeana ATCC 700345.</title>
        <authorList>
            <consortium name="US DOE Joint Genome Institute"/>
            <person name="Copeland A."/>
            <person name="Lucas S."/>
            <person name="Lapidus A."/>
            <person name="Barry K."/>
            <person name="Glavina del Rio T."/>
            <person name="Dalin E."/>
            <person name="Tice H."/>
            <person name="Pitluck S."/>
            <person name="Chertkov O."/>
            <person name="Brettin T."/>
            <person name="Bruce D."/>
            <person name="Detter J.C."/>
            <person name="Han C."/>
            <person name="Schmutz J."/>
            <person name="Larimer F."/>
            <person name="Land M."/>
            <person name="Hauser L."/>
            <person name="Kyrpides N."/>
            <person name="Kim E."/>
            <person name="Zhao J.-S.Z."/>
            <person name="Manno D."/>
            <person name="Hawari J."/>
            <person name="Richardson P."/>
        </authorList>
    </citation>
    <scope>NUCLEOTIDE SEQUENCE [LARGE SCALE GENOMIC DNA]</scope>
    <source>
        <strain>ATCC 700345 / ANG-SQ1</strain>
    </source>
</reference>
<protein>
    <recommendedName>
        <fullName evidence="1">Integration host factor subunit beta</fullName>
        <shortName evidence="1">IHF-beta</shortName>
    </recommendedName>
</protein>
<feature type="chain" id="PRO_1000080053" description="Integration host factor subunit beta">
    <location>
        <begin position="1"/>
        <end position="95"/>
    </location>
</feature>
<dbReference type="EMBL" id="CP000851">
    <property type="protein sequence ID" value="ABV87394.1"/>
    <property type="molecule type" value="Genomic_DNA"/>
</dbReference>
<dbReference type="RefSeq" id="WP_012155310.1">
    <property type="nucleotide sequence ID" value="NC_009901.1"/>
</dbReference>
<dbReference type="SMR" id="A8H4A7"/>
<dbReference type="STRING" id="398579.Spea_2074"/>
<dbReference type="KEGG" id="spl:Spea_2074"/>
<dbReference type="eggNOG" id="COG0776">
    <property type="taxonomic scope" value="Bacteria"/>
</dbReference>
<dbReference type="HOGENOM" id="CLU_105066_2_0_6"/>
<dbReference type="OrthoDB" id="9804203at2"/>
<dbReference type="Proteomes" id="UP000002608">
    <property type="component" value="Chromosome"/>
</dbReference>
<dbReference type="GO" id="GO:0005694">
    <property type="term" value="C:chromosome"/>
    <property type="evidence" value="ECO:0007669"/>
    <property type="project" value="InterPro"/>
</dbReference>
<dbReference type="GO" id="GO:0005829">
    <property type="term" value="C:cytosol"/>
    <property type="evidence" value="ECO:0007669"/>
    <property type="project" value="TreeGrafter"/>
</dbReference>
<dbReference type="GO" id="GO:0003677">
    <property type="term" value="F:DNA binding"/>
    <property type="evidence" value="ECO:0007669"/>
    <property type="project" value="UniProtKB-UniRule"/>
</dbReference>
<dbReference type="GO" id="GO:0030527">
    <property type="term" value="F:structural constituent of chromatin"/>
    <property type="evidence" value="ECO:0007669"/>
    <property type="project" value="InterPro"/>
</dbReference>
<dbReference type="GO" id="GO:0006310">
    <property type="term" value="P:DNA recombination"/>
    <property type="evidence" value="ECO:0007669"/>
    <property type="project" value="UniProtKB-UniRule"/>
</dbReference>
<dbReference type="GO" id="GO:0006355">
    <property type="term" value="P:regulation of DNA-templated transcription"/>
    <property type="evidence" value="ECO:0007669"/>
    <property type="project" value="UniProtKB-UniRule"/>
</dbReference>
<dbReference type="GO" id="GO:0006417">
    <property type="term" value="P:regulation of translation"/>
    <property type="evidence" value="ECO:0007669"/>
    <property type="project" value="UniProtKB-UniRule"/>
</dbReference>
<dbReference type="CDD" id="cd13836">
    <property type="entry name" value="IHF_B"/>
    <property type="match status" value="1"/>
</dbReference>
<dbReference type="FunFam" id="4.10.520.10:FF:000003">
    <property type="entry name" value="Integration host factor subunit beta"/>
    <property type="match status" value="1"/>
</dbReference>
<dbReference type="Gene3D" id="4.10.520.10">
    <property type="entry name" value="IHF-like DNA-binding proteins"/>
    <property type="match status" value="1"/>
</dbReference>
<dbReference type="HAMAP" id="MF_00381">
    <property type="entry name" value="IHF_beta"/>
    <property type="match status" value="1"/>
</dbReference>
<dbReference type="InterPro" id="IPR000119">
    <property type="entry name" value="Hist_DNA-bd"/>
</dbReference>
<dbReference type="InterPro" id="IPR020816">
    <property type="entry name" value="Histone-like_DNA-bd_CS"/>
</dbReference>
<dbReference type="InterPro" id="IPR010992">
    <property type="entry name" value="IHF-like_DNA-bd_dom_sf"/>
</dbReference>
<dbReference type="InterPro" id="IPR005685">
    <property type="entry name" value="IHF_beta"/>
</dbReference>
<dbReference type="NCBIfam" id="TIGR00988">
    <property type="entry name" value="hip"/>
    <property type="match status" value="1"/>
</dbReference>
<dbReference type="NCBIfam" id="NF001222">
    <property type="entry name" value="PRK00199.1"/>
    <property type="match status" value="1"/>
</dbReference>
<dbReference type="PANTHER" id="PTHR33175">
    <property type="entry name" value="DNA-BINDING PROTEIN HU"/>
    <property type="match status" value="1"/>
</dbReference>
<dbReference type="PANTHER" id="PTHR33175:SF5">
    <property type="entry name" value="INTEGRATION HOST FACTOR SUBUNIT BETA"/>
    <property type="match status" value="1"/>
</dbReference>
<dbReference type="Pfam" id="PF00216">
    <property type="entry name" value="Bac_DNA_binding"/>
    <property type="match status" value="1"/>
</dbReference>
<dbReference type="PRINTS" id="PR01727">
    <property type="entry name" value="DNABINDINGHU"/>
</dbReference>
<dbReference type="SMART" id="SM00411">
    <property type="entry name" value="BHL"/>
    <property type="match status" value="1"/>
</dbReference>
<dbReference type="SUPFAM" id="SSF47729">
    <property type="entry name" value="IHF-like DNA-binding proteins"/>
    <property type="match status" value="1"/>
</dbReference>
<dbReference type="PROSITE" id="PS00045">
    <property type="entry name" value="HISTONE_LIKE"/>
    <property type="match status" value="1"/>
</dbReference>
<keyword id="KW-0233">DNA recombination</keyword>
<keyword id="KW-0238">DNA-binding</keyword>
<keyword id="KW-1185">Reference proteome</keyword>
<keyword id="KW-0804">Transcription</keyword>
<keyword id="KW-0805">Transcription regulation</keyword>
<keyword id="KW-0810">Translation regulation</keyword>
<proteinExistence type="inferred from homology"/>
<name>IHFB_SHEPA</name>
<sequence>MTKSELIEKLATRQSQLSAKEVEAAIKEMLEQMADTLETGDRIEIRGFGSFSLHYRAPRTGRNPKTGTSVELEGKYVPHFKPGKELRERVDAINT</sequence>
<evidence type="ECO:0000255" key="1">
    <source>
        <dbReference type="HAMAP-Rule" id="MF_00381"/>
    </source>
</evidence>
<organism>
    <name type="scientific">Shewanella pealeana (strain ATCC 700345 / ANG-SQ1)</name>
    <dbReference type="NCBI Taxonomy" id="398579"/>
    <lineage>
        <taxon>Bacteria</taxon>
        <taxon>Pseudomonadati</taxon>
        <taxon>Pseudomonadota</taxon>
        <taxon>Gammaproteobacteria</taxon>
        <taxon>Alteromonadales</taxon>
        <taxon>Shewanellaceae</taxon>
        <taxon>Shewanella</taxon>
    </lineage>
</organism>
<comment type="function">
    <text evidence="1">This protein is one of the two subunits of integration host factor, a specific DNA-binding protein that functions in genetic recombination as well as in transcriptional and translational control.</text>
</comment>
<comment type="subunit">
    <text evidence="1">Heterodimer of an alpha and a beta chain.</text>
</comment>
<comment type="similarity">
    <text evidence="1">Belongs to the bacterial histone-like protein family.</text>
</comment>
<accession>A8H4A7</accession>
<gene>
    <name evidence="1" type="primary">ihfB</name>
    <name evidence="1" type="synonym">himD</name>
    <name type="ordered locus">Spea_2074</name>
</gene>